<accession>Q73VH7</accession>
<evidence type="ECO:0000255" key="1">
    <source>
        <dbReference type="HAMAP-Rule" id="MF_00435"/>
    </source>
</evidence>
<evidence type="ECO:0000255" key="2">
    <source>
        <dbReference type="PROSITE-ProRule" id="PRU01197"/>
    </source>
</evidence>
<evidence type="ECO:0000255" key="3">
    <source>
        <dbReference type="PROSITE-ProRule" id="PRU01198"/>
    </source>
</evidence>
<evidence type="ECO:0000305" key="4"/>
<name>ILVC_MYCPA</name>
<protein>
    <recommendedName>
        <fullName evidence="1">Ketol-acid reductoisomerase (NADP(+))</fullName>
        <shortName evidence="1">KARI</shortName>
        <ecNumber evidence="1">1.1.1.86</ecNumber>
    </recommendedName>
    <alternativeName>
        <fullName evidence="1">Acetohydroxy-acid isomeroreductase</fullName>
        <shortName evidence="1">AHIR</shortName>
    </alternativeName>
    <alternativeName>
        <fullName evidence="1">Alpha-keto-beta-hydroxylacyl reductoisomerase</fullName>
    </alternativeName>
    <alternativeName>
        <fullName evidence="1">Ketol-acid reductoisomerase type 1</fullName>
    </alternativeName>
    <alternativeName>
        <fullName evidence="1">Ketol-acid reductoisomerase type I</fullName>
    </alternativeName>
</protein>
<keyword id="KW-0028">Amino-acid biosynthesis</keyword>
<keyword id="KW-0100">Branched-chain amino acid biosynthesis</keyword>
<keyword id="KW-0460">Magnesium</keyword>
<keyword id="KW-0479">Metal-binding</keyword>
<keyword id="KW-0521">NADP</keyword>
<keyword id="KW-0560">Oxidoreductase</keyword>
<keyword id="KW-1185">Reference proteome</keyword>
<sequence length="333" mass="36014">MFYDDDADLTIIQGRKVGVIGYGSQGHAHSLSLRDSGVQVKVGLKEGSKSRAKVSEQGLDVDTPAAVAKWADVIMLLAPDTAQADIFKNDIEPNLSDGDALFFGHGLNIHFGLIKPPAEVTVAMVAPKGPGHLVRRQFVDGKGVPCLIAVDQDPTGKGEALALSYAKAIGGTRAGVIKTTFKDETETDLFGEQAVLCGGTEELVKAGFDVMVEAGYPPEMAYFEVLHELKLIVDLMYEGGIARMNYSVSDTAEFGGYLSGPRVIDAGTKDRMREILRDIQNGDFVKKLVANVEGGNKQLEQLRKENAEHPIEVVGKRLRDLMSWVDRPITETA</sequence>
<organism>
    <name type="scientific">Mycolicibacterium paratuberculosis (strain ATCC BAA-968 / K-10)</name>
    <name type="common">Mycobacterium paratuberculosis</name>
    <dbReference type="NCBI Taxonomy" id="262316"/>
    <lineage>
        <taxon>Bacteria</taxon>
        <taxon>Bacillati</taxon>
        <taxon>Actinomycetota</taxon>
        <taxon>Actinomycetes</taxon>
        <taxon>Mycobacteriales</taxon>
        <taxon>Mycobacteriaceae</taxon>
        <taxon>Mycobacterium</taxon>
        <taxon>Mycobacterium avium complex (MAC)</taxon>
    </lineage>
</organism>
<comment type="function">
    <text evidence="1">Involved in the biosynthesis of branched-chain amino acids (BCAA). Catalyzes an alkyl-migration followed by a ketol-acid reduction of (S)-2-acetolactate (S2AL) to yield (R)-2,3-dihydroxy-isovalerate. In the isomerase reaction, S2AL is rearranged via a Mg-dependent methyl migration to produce 3-hydroxy-3-methyl-2-ketobutyrate (HMKB). In the reductase reaction, this 2-ketoacid undergoes a metal-dependent reduction by NADPH to yield (R)-2,3-dihydroxy-isovalerate.</text>
</comment>
<comment type="catalytic activity">
    <reaction evidence="1">
        <text>(2R)-2,3-dihydroxy-3-methylbutanoate + NADP(+) = (2S)-2-acetolactate + NADPH + H(+)</text>
        <dbReference type="Rhea" id="RHEA:22068"/>
        <dbReference type="ChEBI" id="CHEBI:15378"/>
        <dbReference type="ChEBI" id="CHEBI:49072"/>
        <dbReference type="ChEBI" id="CHEBI:57783"/>
        <dbReference type="ChEBI" id="CHEBI:58349"/>
        <dbReference type="ChEBI" id="CHEBI:58476"/>
        <dbReference type="EC" id="1.1.1.86"/>
    </reaction>
</comment>
<comment type="catalytic activity">
    <reaction evidence="1">
        <text>(2R,3R)-2,3-dihydroxy-3-methylpentanoate + NADP(+) = (S)-2-ethyl-2-hydroxy-3-oxobutanoate + NADPH + H(+)</text>
        <dbReference type="Rhea" id="RHEA:13493"/>
        <dbReference type="ChEBI" id="CHEBI:15378"/>
        <dbReference type="ChEBI" id="CHEBI:49256"/>
        <dbReference type="ChEBI" id="CHEBI:49258"/>
        <dbReference type="ChEBI" id="CHEBI:57783"/>
        <dbReference type="ChEBI" id="CHEBI:58349"/>
        <dbReference type="EC" id="1.1.1.86"/>
    </reaction>
</comment>
<comment type="cofactor">
    <cofactor evidence="1">
        <name>Mg(2+)</name>
        <dbReference type="ChEBI" id="CHEBI:18420"/>
    </cofactor>
    <text evidence="1">Binds 2 magnesium ions per subunit.</text>
</comment>
<comment type="pathway">
    <text evidence="1">Amino-acid biosynthesis; L-isoleucine biosynthesis; L-isoleucine from 2-oxobutanoate: step 2/4.</text>
</comment>
<comment type="pathway">
    <text evidence="1">Amino-acid biosynthesis; L-valine biosynthesis; L-valine from pyruvate: step 2/4.</text>
</comment>
<comment type="similarity">
    <text evidence="1">Belongs to the ketol-acid reductoisomerase family.</text>
</comment>
<comment type="sequence caution" evidence="4">
    <conflict type="erroneous initiation">
        <sequence resource="EMBL-CDS" id="AAS05584"/>
    </conflict>
</comment>
<gene>
    <name evidence="1" type="primary">ilvC</name>
    <name type="ordered locus">MAP_3036c</name>
</gene>
<dbReference type="EC" id="1.1.1.86" evidence="1"/>
<dbReference type="EMBL" id="AE016958">
    <property type="protein sequence ID" value="AAS05584.1"/>
    <property type="status" value="ALT_INIT"/>
    <property type="molecule type" value="Genomic_DNA"/>
</dbReference>
<dbReference type="RefSeq" id="WP_003878743.1">
    <property type="nucleotide sequence ID" value="NZ_CP106873.1"/>
</dbReference>
<dbReference type="SMR" id="Q73VH7"/>
<dbReference type="STRING" id="262316.MAP_3036c"/>
<dbReference type="KEGG" id="mpa:MAP_3036c"/>
<dbReference type="eggNOG" id="COG0059">
    <property type="taxonomic scope" value="Bacteria"/>
</dbReference>
<dbReference type="HOGENOM" id="CLU_033821_0_1_11"/>
<dbReference type="UniPathway" id="UPA00047">
    <property type="reaction ID" value="UER00056"/>
</dbReference>
<dbReference type="UniPathway" id="UPA00049">
    <property type="reaction ID" value="UER00060"/>
</dbReference>
<dbReference type="Proteomes" id="UP000000580">
    <property type="component" value="Chromosome"/>
</dbReference>
<dbReference type="GO" id="GO:0005829">
    <property type="term" value="C:cytosol"/>
    <property type="evidence" value="ECO:0007669"/>
    <property type="project" value="TreeGrafter"/>
</dbReference>
<dbReference type="GO" id="GO:0004455">
    <property type="term" value="F:ketol-acid reductoisomerase activity"/>
    <property type="evidence" value="ECO:0007669"/>
    <property type="project" value="UniProtKB-UniRule"/>
</dbReference>
<dbReference type="GO" id="GO:0000287">
    <property type="term" value="F:magnesium ion binding"/>
    <property type="evidence" value="ECO:0007669"/>
    <property type="project" value="UniProtKB-UniRule"/>
</dbReference>
<dbReference type="GO" id="GO:0050661">
    <property type="term" value="F:NADP binding"/>
    <property type="evidence" value="ECO:0007669"/>
    <property type="project" value="InterPro"/>
</dbReference>
<dbReference type="GO" id="GO:0009097">
    <property type="term" value="P:isoleucine biosynthetic process"/>
    <property type="evidence" value="ECO:0007669"/>
    <property type="project" value="UniProtKB-UniRule"/>
</dbReference>
<dbReference type="GO" id="GO:0009099">
    <property type="term" value="P:L-valine biosynthetic process"/>
    <property type="evidence" value="ECO:0007669"/>
    <property type="project" value="UniProtKB-UniRule"/>
</dbReference>
<dbReference type="FunFam" id="3.40.50.720:FF:000023">
    <property type="entry name" value="Ketol-acid reductoisomerase (NADP(+))"/>
    <property type="match status" value="1"/>
</dbReference>
<dbReference type="Gene3D" id="6.10.240.10">
    <property type="match status" value="1"/>
</dbReference>
<dbReference type="Gene3D" id="3.40.50.720">
    <property type="entry name" value="NAD(P)-binding Rossmann-like Domain"/>
    <property type="match status" value="1"/>
</dbReference>
<dbReference type="HAMAP" id="MF_00435">
    <property type="entry name" value="IlvC"/>
    <property type="match status" value="1"/>
</dbReference>
<dbReference type="InterPro" id="IPR008927">
    <property type="entry name" value="6-PGluconate_DH-like_C_sf"/>
</dbReference>
<dbReference type="InterPro" id="IPR013023">
    <property type="entry name" value="KARI"/>
</dbReference>
<dbReference type="InterPro" id="IPR000506">
    <property type="entry name" value="KARI_C"/>
</dbReference>
<dbReference type="InterPro" id="IPR013116">
    <property type="entry name" value="KARI_N"/>
</dbReference>
<dbReference type="InterPro" id="IPR014359">
    <property type="entry name" value="KARI_prok"/>
</dbReference>
<dbReference type="InterPro" id="IPR036291">
    <property type="entry name" value="NAD(P)-bd_dom_sf"/>
</dbReference>
<dbReference type="NCBIfam" id="TIGR00465">
    <property type="entry name" value="ilvC"/>
    <property type="match status" value="1"/>
</dbReference>
<dbReference type="NCBIfam" id="NF004017">
    <property type="entry name" value="PRK05479.1"/>
    <property type="match status" value="1"/>
</dbReference>
<dbReference type="NCBIfam" id="NF009940">
    <property type="entry name" value="PRK13403.1"/>
    <property type="match status" value="1"/>
</dbReference>
<dbReference type="PANTHER" id="PTHR21371">
    <property type="entry name" value="KETOL-ACID REDUCTOISOMERASE, MITOCHONDRIAL"/>
    <property type="match status" value="1"/>
</dbReference>
<dbReference type="PANTHER" id="PTHR21371:SF1">
    <property type="entry name" value="KETOL-ACID REDUCTOISOMERASE, MITOCHONDRIAL"/>
    <property type="match status" value="1"/>
</dbReference>
<dbReference type="Pfam" id="PF01450">
    <property type="entry name" value="KARI_C"/>
    <property type="match status" value="1"/>
</dbReference>
<dbReference type="Pfam" id="PF07991">
    <property type="entry name" value="KARI_N"/>
    <property type="match status" value="1"/>
</dbReference>
<dbReference type="PIRSF" id="PIRSF000116">
    <property type="entry name" value="IlvC_gammaproteo"/>
    <property type="match status" value="1"/>
</dbReference>
<dbReference type="SUPFAM" id="SSF48179">
    <property type="entry name" value="6-phosphogluconate dehydrogenase C-terminal domain-like"/>
    <property type="match status" value="1"/>
</dbReference>
<dbReference type="SUPFAM" id="SSF51735">
    <property type="entry name" value="NAD(P)-binding Rossmann-fold domains"/>
    <property type="match status" value="1"/>
</dbReference>
<dbReference type="PROSITE" id="PS51851">
    <property type="entry name" value="KARI_C"/>
    <property type="match status" value="1"/>
</dbReference>
<dbReference type="PROSITE" id="PS51850">
    <property type="entry name" value="KARI_N"/>
    <property type="match status" value="1"/>
</dbReference>
<feature type="chain" id="PRO_0000151328" description="Ketol-acid reductoisomerase (NADP(+))">
    <location>
        <begin position="1"/>
        <end position="333"/>
    </location>
</feature>
<feature type="domain" description="KARI N-terminal Rossmann" evidence="2">
    <location>
        <begin position="1"/>
        <end position="179"/>
    </location>
</feature>
<feature type="domain" description="KARI C-terminal knotted" evidence="3">
    <location>
        <begin position="180"/>
        <end position="325"/>
    </location>
</feature>
<feature type="active site" evidence="1">
    <location>
        <position position="105"/>
    </location>
</feature>
<feature type="binding site" evidence="1">
    <location>
        <begin position="22"/>
        <end position="25"/>
    </location>
    <ligand>
        <name>NADP(+)</name>
        <dbReference type="ChEBI" id="CHEBI:58349"/>
    </ligand>
</feature>
<feature type="binding site" evidence="1">
    <location>
        <position position="45"/>
    </location>
    <ligand>
        <name>NADP(+)</name>
        <dbReference type="ChEBI" id="CHEBI:58349"/>
    </ligand>
</feature>
<feature type="binding site" evidence="1">
    <location>
        <position position="48"/>
    </location>
    <ligand>
        <name>NADP(+)</name>
        <dbReference type="ChEBI" id="CHEBI:58349"/>
    </ligand>
</feature>
<feature type="binding site" evidence="1">
    <location>
        <position position="50"/>
    </location>
    <ligand>
        <name>NADP(+)</name>
        <dbReference type="ChEBI" id="CHEBI:58349"/>
    </ligand>
</feature>
<feature type="binding site" evidence="1">
    <location>
        <begin position="80"/>
        <end position="83"/>
    </location>
    <ligand>
        <name>NADP(+)</name>
        <dbReference type="ChEBI" id="CHEBI:58349"/>
    </ligand>
</feature>
<feature type="binding site" evidence="1">
    <location>
        <position position="131"/>
    </location>
    <ligand>
        <name>NADP(+)</name>
        <dbReference type="ChEBI" id="CHEBI:58349"/>
    </ligand>
</feature>
<feature type="binding site" evidence="1">
    <location>
        <position position="188"/>
    </location>
    <ligand>
        <name>Mg(2+)</name>
        <dbReference type="ChEBI" id="CHEBI:18420"/>
        <label>1</label>
    </ligand>
</feature>
<feature type="binding site" evidence="1">
    <location>
        <position position="188"/>
    </location>
    <ligand>
        <name>Mg(2+)</name>
        <dbReference type="ChEBI" id="CHEBI:18420"/>
        <label>2</label>
    </ligand>
</feature>
<feature type="binding site" evidence="1">
    <location>
        <position position="192"/>
    </location>
    <ligand>
        <name>Mg(2+)</name>
        <dbReference type="ChEBI" id="CHEBI:18420"/>
        <label>1</label>
    </ligand>
</feature>
<feature type="binding site" evidence="1">
    <location>
        <position position="224"/>
    </location>
    <ligand>
        <name>Mg(2+)</name>
        <dbReference type="ChEBI" id="CHEBI:18420"/>
        <label>2</label>
    </ligand>
</feature>
<feature type="binding site" evidence="1">
    <location>
        <position position="228"/>
    </location>
    <ligand>
        <name>Mg(2+)</name>
        <dbReference type="ChEBI" id="CHEBI:18420"/>
        <label>2</label>
    </ligand>
</feature>
<feature type="binding site" evidence="1">
    <location>
        <position position="249"/>
    </location>
    <ligand>
        <name>substrate</name>
    </ligand>
</feature>
<proteinExistence type="inferred from homology"/>
<reference key="1">
    <citation type="journal article" date="2005" name="Proc. Natl. Acad. Sci. U.S.A.">
        <title>The complete genome sequence of Mycobacterium avium subspecies paratuberculosis.</title>
        <authorList>
            <person name="Li L."/>
            <person name="Bannantine J.P."/>
            <person name="Zhang Q."/>
            <person name="Amonsin A."/>
            <person name="May B.J."/>
            <person name="Alt D."/>
            <person name="Banerji N."/>
            <person name="Kanjilal S."/>
            <person name="Kapur V."/>
        </authorList>
    </citation>
    <scope>NUCLEOTIDE SEQUENCE [LARGE SCALE GENOMIC DNA]</scope>
    <source>
        <strain>ATCC BAA-968 / K-10</strain>
    </source>
</reference>